<proteinExistence type="evidence at protein level"/>
<protein>
    <recommendedName>
        <fullName>kinetoplast-associated protein 3</fullName>
    </recommendedName>
    <alternativeName>
        <fullName>Histone H1-like protein p17</fullName>
    </alternativeName>
</protein>
<reference key="1">
    <citation type="journal article" date="1997" name="Mol. Biochem. Parasitol.">
        <title>Tandem arrangement of two genes encoding kinetoplast-associated H1 histone-like proteins.</title>
        <authorList>
            <person name="Hines J.C."/>
            <person name="Ray D.S."/>
        </authorList>
    </citation>
    <scope>NUCLEOTIDE SEQUENCE [GENOMIC DNA]</scope>
    <scope>INDUCTION</scope>
</reference>
<reference key="2">
    <citation type="journal article" date="1996" name="Mol. Cell. Biol.">
        <title>Nucleus-encoded histone H1-like proteins are associated with kinetoplast DNA in the trypanosomatid Crithidia fasciculata.</title>
        <authorList>
            <person name="Xu C.W."/>
            <person name="Hines J.C."/>
            <person name="Engel M.L."/>
            <person name="Russell D.G."/>
            <person name="Ray D.S."/>
        </authorList>
    </citation>
    <scope>NUCLEOTIDE SEQUENCE [MRNA]</scope>
    <scope>DNA-BINDING</scope>
    <scope>FUNCTION</scope>
    <scope>SUBCELLULAR LOCATION</scope>
</reference>
<reference key="3">
    <citation type="journal article" date="1993" name="Proc. Natl. Acad. Sci. U.S.A.">
        <title>Isolation of proteins associated with kinetoplast DNA networks in vivo.</title>
        <authorList>
            <person name="Xu C."/>
            <person name="Ray D.S."/>
        </authorList>
    </citation>
    <scope>NUCLEOTIDE SEQUENCE [MRNA] OF 1-19</scope>
    <scope>PROTEIN SEQUENCE OF 10-30</scope>
    <scope>DNA-BINDING</scope>
    <scope>SUBCELLULAR LOCATION</scope>
</reference>
<reference key="4">
    <citation type="journal article" date="2003" name="Eukaryot. Cell">
        <title>Sequence elements in both the intergenic space and the 3' untranslated region of the Crithidia fasciculata KAP3 gene are required for cell cycle regulation of KAP3 mRNA.</title>
        <authorList>
            <person name="Avliyakulov N.K."/>
            <person name="Hines J.C."/>
            <person name="Ray D.S."/>
        </authorList>
    </citation>
    <scope>INDUCTION</scope>
</reference>
<dbReference type="EMBL" id="AY143553">
    <property type="protein sequence ID" value="AAN46297.1"/>
    <property type="molecule type" value="Genomic_DNA"/>
</dbReference>
<dbReference type="PIR" id="JC6091">
    <property type="entry name" value="JC6091"/>
</dbReference>
<dbReference type="SMR" id="Q8IS98"/>
<dbReference type="VEuPathDB" id="TriTrypDB:CFAC1_300049800"/>
<dbReference type="GO" id="GO:0020023">
    <property type="term" value="C:kinetoplast"/>
    <property type="evidence" value="ECO:0000314"/>
    <property type="project" value="UniProtKB"/>
</dbReference>
<dbReference type="GO" id="GO:0003677">
    <property type="term" value="F:DNA binding"/>
    <property type="evidence" value="ECO:0000314"/>
    <property type="project" value="UniProtKB"/>
</dbReference>
<dbReference type="InterPro" id="IPR009071">
    <property type="entry name" value="HMG_box_dom"/>
</dbReference>
<dbReference type="InterPro" id="IPR052695">
    <property type="entry name" value="Kinetoplast-DNA-binding"/>
</dbReference>
<dbReference type="PANTHER" id="PTHR37564:SF4">
    <property type="entry name" value="DNA-ASSOCIATED PROTEIN, PUTATIVE-RELATED"/>
    <property type="match status" value="1"/>
</dbReference>
<dbReference type="PANTHER" id="PTHR37564">
    <property type="entry name" value="KINETOPLAST DNA-ASSOCIATED PROTEIN"/>
    <property type="match status" value="1"/>
</dbReference>
<dbReference type="SMART" id="SM00398">
    <property type="entry name" value="HMG"/>
    <property type="match status" value="1"/>
</dbReference>
<keyword id="KW-0903">Direct protein sequencing</keyword>
<keyword id="KW-0238">DNA-binding</keyword>
<keyword id="KW-0419">Kinetoplast</keyword>
<keyword id="KW-0496">Mitochondrion</keyword>
<organism>
    <name type="scientific">Crithidia fasciculata</name>
    <dbReference type="NCBI Taxonomy" id="5656"/>
    <lineage>
        <taxon>Eukaryota</taxon>
        <taxon>Discoba</taxon>
        <taxon>Euglenozoa</taxon>
        <taxon>Kinetoplastea</taxon>
        <taxon>Metakinetoplastina</taxon>
        <taxon>Trypanosomatida</taxon>
        <taxon>Trypanosomatidae</taxon>
        <taxon>Leishmaniinae</taxon>
        <taxon>Crithidia</taxon>
    </lineage>
</organism>
<comment type="function">
    <text evidence="4">Histone H1-like DNA-binding protein involved in the organization and segregation of kinetoplast DNA (kDNA). The mitochondrial DNA of kinetoplastid protozoa consists of about 5,000 minicircles and 20 to 30 maxicircles. These circular DNAs are held together by catenation into a highly organized compact disk structure referred to as a kinetoplast DNA (kDNA) network. Binds preferentially to a specific fragment of minicircle DNA and is able to compact kDNA networks through DNA charge neutralization and condensation.</text>
</comment>
<comment type="subunit">
    <text>Associates with the kinetoplast DNA network.</text>
</comment>
<comment type="subcellular location">
    <subcellularLocation>
        <location evidence="3 4">Mitochondrion matrix</location>
        <location evidence="3 4">Kinetoplast</location>
    </subcellularLocation>
</comment>
<comment type="induction">
    <text evidence="2 5">Expression varies periodically during the cell cycle in the same manner as transcripts of several kinetoplast and nuclear DNA replication genes.</text>
</comment>
<comment type="similarity">
    <text evidence="6">Belongs to the KAP family.</text>
</comment>
<sequence>MLRRSPTLLRVSPFSLYMKDLAKNGTLQNDRNPAKTASRLYRKLSEPEKMALQKRAARVSYPALDAYNRFQKEYAHRFLHLSNKKRQREVSKLWAELKKNGTVKVPKAPKAAKSASSKVKTAAKTAKKTTAARK</sequence>
<feature type="propeptide" id="PRO_0000409302">
    <location>
        <begin position="1"/>
        <end position="10"/>
    </location>
</feature>
<feature type="chain" id="PRO_0000409303" description="kinetoplast-associated protein 3">
    <location>
        <begin position="11"/>
        <end position="134"/>
    </location>
</feature>
<feature type="region of interest" description="Disordered" evidence="1">
    <location>
        <begin position="106"/>
        <end position="134"/>
    </location>
</feature>
<feature type="compositionally biased region" description="Low complexity" evidence="1">
    <location>
        <begin position="106"/>
        <end position="124"/>
    </location>
</feature>
<feature type="compositionally biased region" description="Basic residues" evidence="1">
    <location>
        <begin position="125"/>
        <end position="134"/>
    </location>
</feature>
<accession>Q8IS98</accession>
<evidence type="ECO:0000256" key="1">
    <source>
        <dbReference type="SAM" id="MobiDB-lite"/>
    </source>
</evidence>
<evidence type="ECO:0000269" key="2">
    <source>
    </source>
</evidence>
<evidence type="ECO:0000269" key="3">
    <source>
    </source>
</evidence>
<evidence type="ECO:0000269" key="4">
    <source>
    </source>
</evidence>
<evidence type="ECO:0000269" key="5">
    <source>
    </source>
</evidence>
<evidence type="ECO:0000305" key="6"/>
<gene>
    <name type="primary">KAP3</name>
</gene>
<name>KAP3_CRIFA</name>